<comment type="catalytic activity">
    <reaction evidence="1">
        <text>alpha-D-xylose = alpha-D-xylulofuranose</text>
        <dbReference type="Rhea" id="RHEA:22816"/>
        <dbReference type="ChEBI" id="CHEBI:28518"/>
        <dbReference type="ChEBI" id="CHEBI:188998"/>
        <dbReference type="EC" id="5.3.1.5"/>
    </reaction>
</comment>
<comment type="cofactor">
    <cofactor evidence="1">
        <name>Mg(2+)</name>
        <dbReference type="ChEBI" id="CHEBI:18420"/>
    </cofactor>
    <text evidence="1">Binds 2 magnesium ions per subunit.</text>
</comment>
<comment type="subunit">
    <text evidence="1">Homotetramer.</text>
</comment>
<comment type="subcellular location">
    <subcellularLocation>
        <location evidence="1">Cytoplasm</location>
    </subcellularLocation>
</comment>
<comment type="similarity">
    <text evidence="1">Belongs to the xylose isomerase family.</text>
</comment>
<keyword id="KW-0119">Carbohydrate metabolism</keyword>
<keyword id="KW-0963">Cytoplasm</keyword>
<keyword id="KW-0413">Isomerase</keyword>
<keyword id="KW-0460">Magnesium</keyword>
<keyword id="KW-0479">Metal-binding</keyword>
<keyword id="KW-0859">Xylose metabolism</keyword>
<organism>
    <name type="scientific">Yersinia pseudotuberculosis serotype O:3 (strain YPIII)</name>
    <dbReference type="NCBI Taxonomy" id="502800"/>
    <lineage>
        <taxon>Bacteria</taxon>
        <taxon>Pseudomonadati</taxon>
        <taxon>Pseudomonadota</taxon>
        <taxon>Gammaproteobacteria</taxon>
        <taxon>Enterobacterales</taxon>
        <taxon>Yersiniaceae</taxon>
        <taxon>Yersinia</taxon>
    </lineage>
</organism>
<gene>
    <name evidence="1" type="primary">xylA</name>
    <name type="ordered locus">YPK_0056</name>
</gene>
<feature type="chain" id="PRO_1000200317" description="Xylose isomerase">
    <location>
        <begin position="1"/>
        <end position="439"/>
    </location>
</feature>
<feature type="active site" evidence="1">
    <location>
        <position position="101"/>
    </location>
</feature>
<feature type="active site" evidence="1">
    <location>
        <position position="104"/>
    </location>
</feature>
<feature type="binding site" evidence="1">
    <location>
        <position position="232"/>
    </location>
    <ligand>
        <name>Mg(2+)</name>
        <dbReference type="ChEBI" id="CHEBI:18420"/>
        <label>1</label>
    </ligand>
</feature>
<feature type="binding site" evidence="1">
    <location>
        <position position="268"/>
    </location>
    <ligand>
        <name>Mg(2+)</name>
        <dbReference type="ChEBI" id="CHEBI:18420"/>
        <label>1</label>
    </ligand>
</feature>
<feature type="binding site" evidence="1">
    <location>
        <position position="268"/>
    </location>
    <ligand>
        <name>Mg(2+)</name>
        <dbReference type="ChEBI" id="CHEBI:18420"/>
        <label>2</label>
    </ligand>
</feature>
<feature type="binding site" evidence="1">
    <location>
        <position position="271"/>
    </location>
    <ligand>
        <name>Mg(2+)</name>
        <dbReference type="ChEBI" id="CHEBI:18420"/>
        <label>2</label>
    </ligand>
</feature>
<feature type="binding site" evidence="1">
    <location>
        <position position="296"/>
    </location>
    <ligand>
        <name>Mg(2+)</name>
        <dbReference type="ChEBI" id="CHEBI:18420"/>
        <label>1</label>
    </ligand>
</feature>
<feature type="binding site" evidence="1">
    <location>
        <position position="307"/>
    </location>
    <ligand>
        <name>Mg(2+)</name>
        <dbReference type="ChEBI" id="CHEBI:18420"/>
        <label>2</label>
    </ligand>
</feature>
<feature type="binding site" evidence="1">
    <location>
        <position position="309"/>
    </location>
    <ligand>
        <name>Mg(2+)</name>
        <dbReference type="ChEBI" id="CHEBI:18420"/>
        <label>2</label>
    </ligand>
</feature>
<feature type="binding site" evidence="1">
    <location>
        <position position="339"/>
    </location>
    <ligand>
        <name>Mg(2+)</name>
        <dbReference type="ChEBI" id="CHEBI:18420"/>
        <label>1</label>
    </ligand>
</feature>
<evidence type="ECO:0000255" key="1">
    <source>
        <dbReference type="HAMAP-Rule" id="MF_00455"/>
    </source>
</evidence>
<protein>
    <recommendedName>
        <fullName evidence="1">Xylose isomerase</fullName>
        <ecNumber evidence="1">5.3.1.5</ecNumber>
    </recommendedName>
</protein>
<dbReference type="EC" id="5.3.1.5" evidence="1"/>
<dbReference type="EMBL" id="CP000950">
    <property type="protein sequence ID" value="ACA66370.1"/>
    <property type="molecule type" value="Genomic_DNA"/>
</dbReference>
<dbReference type="RefSeq" id="WP_002209593.1">
    <property type="nucleotide sequence ID" value="NZ_CP009792.1"/>
</dbReference>
<dbReference type="SMR" id="B1JH40"/>
<dbReference type="GeneID" id="57974675"/>
<dbReference type="KEGG" id="ypy:YPK_0056"/>
<dbReference type="PATRIC" id="fig|502800.11.peg.657"/>
<dbReference type="GO" id="GO:0005737">
    <property type="term" value="C:cytoplasm"/>
    <property type="evidence" value="ECO:0007669"/>
    <property type="project" value="UniProtKB-SubCell"/>
</dbReference>
<dbReference type="GO" id="GO:0000287">
    <property type="term" value="F:magnesium ion binding"/>
    <property type="evidence" value="ECO:0007669"/>
    <property type="project" value="UniProtKB-UniRule"/>
</dbReference>
<dbReference type="GO" id="GO:0009045">
    <property type="term" value="F:xylose isomerase activity"/>
    <property type="evidence" value="ECO:0007669"/>
    <property type="project" value="UniProtKB-UniRule"/>
</dbReference>
<dbReference type="GO" id="GO:0042732">
    <property type="term" value="P:D-xylose metabolic process"/>
    <property type="evidence" value="ECO:0007669"/>
    <property type="project" value="UniProtKB-UniRule"/>
</dbReference>
<dbReference type="FunFam" id="3.20.20.150:FF:000002">
    <property type="entry name" value="Xylose isomerase"/>
    <property type="match status" value="1"/>
</dbReference>
<dbReference type="Gene3D" id="3.20.20.150">
    <property type="entry name" value="Divalent-metal-dependent TIM barrel enzymes"/>
    <property type="match status" value="1"/>
</dbReference>
<dbReference type="HAMAP" id="MF_00455">
    <property type="entry name" value="Xylose_isom_A"/>
    <property type="match status" value="1"/>
</dbReference>
<dbReference type="InterPro" id="IPR036237">
    <property type="entry name" value="Xyl_isomerase-like_sf"/>
</dbReference>
<dbReference type="InterPro" id="IPR013452">
    <property type="entry name" value="Xylose_isom_bac"/>
</dbReference>
<dbReference type="InterPro" id="IPR001998">
    <property type="entry name" value="Xylose_isomerase"/>
</dbReference>
<dbReference type="NCBIfam" id="NF003998">
    <property type="entry name" value="PRK05474.1"/>
    <property type="match status" value="1"/>
</dbReference>
<dbReference type="NCBIfam" id="TIGR02630">
    <property type="entry name" value="xylose_isom_A"/>
    <property type="match status" value="1"/>
</dbReference>
<dbReference type="PANTHER" id="PTHR48408">
    <property type="match status" value="1"/>
</dbReference>
<dbReference type="PANTHER" id="PTHR48408:SF1">
    <property type="entry name" value="XYLOSE ISOMERASE"/>
    <property type="match status" value="1"/>
</dbReference>
<dbReference type="PRINTS" id="PR00688">
    <property type="entry name" value="XYLOSISMRASE"/>
</dbReference>
<dbReference type="SUPFAM" id="SSF51658">
    <property type="entry name" value="Xylose isomerase-like"/>
    <property type="match status" value="1"/>
</dbReference>
<dbReference type="PROSITE" id="PS51415">
    <property type="entry name" value="XYLOSE_ISOMERASE"/>
    <property type="match status" value="1"/>
</dbReference>
<reference key="1">
    <citation type="submission" date="2008-02" db="EMBL/GenBank/DDBJ databases">
        <title>Complete sequence of Yersinia pseudotuberculosis YPIII.</title>
        <authorList>
            <consortium name="US DOE Joint Genome Institute"/>
            <person name="Copeland A."/>
            <person name="Lucas S."/>
            <person name="Lapidus A."/>
            <person name="Glavina del Rio T."/>
            <person name="Dalin E."/>
            <person name="Tice H."/>
            <person name="Bruce D."/>
            <person name="Goodwin L."/>
            <person name="Pitluck S."/>
            <person name="Munk A.C."/>
            <person name="Brettin T."/>
            <person name="Detter J.C."/>
            <person name="Han C."/>
            <person name="Tapia R."/>
            <person name="Schmutz J."/>
            <person name="Larimer F."/>
            <person name="Land M."/>
            <person name="Hauser L."/>
            <person name="Challacombe J.F."/>
            <person name="Green L."/>
            <person name="Lindler L.E."/>
            <person name="Nikolich M.P."/>
            <person name="Richardson P."/>
        </authorList>
    </citation>
    <scope>NUCLEOTIDE SEQUENCE [LARGE SCALE GENOMIC DNA]</scope>
    <source>
        <strain>YPIII</strain>
    </source>
</reference>
<accession>B1JH40</accession>
<name>XYLA_YERPY</name>
<proteinExistence type="inferred from homology"/>
<sequence length="439" mass="49550">MQSYFNELEQVRYEGSQSTNPLAFHHYNPDEMILGKRMADHLRFAACYWHTFCWGGADMFGANAFDRPWQQPGDALALAKRKAEVAFEFFHKLNVPYYCFHDVDVSPEGASLQEYLNNFAVMTDVLAEKQAASGVKLLWGTANCFTHPRYGAGAATNPDPEVFSWAATQVFTAMNATRQLGGENYVLWGGREGYETLLNTDLRQEREQIGRFMQMVVEHKHKTGFQGTLLIEPKPQEPTKHQYDYDVATVYGFLKQFGLEKEIKVNIEANHATLAGHSFHHEIASAIALGIFGSVDANRGDPQLGWDTDQFPNSVEENTLVMFEILKAGGFTTGGLNFDAKVRRQSTDKYDLFYGHIGAMDTMALALKFAAKMIEDGQLDQIVAKRYAGWNSELGQQILQGKMSLEELSRYASQHNLNPQHQSGHQELLENKVNRYLFG</sequence>